<reference key="1">
    <citation type="journal article" date="1997" name="DNA Res.">
        <title>Structural analysis of Arabidopsis thaliana chromosome 5. I. Sequence features of the 1.6 Mb regions covered by twenty physically assigned P1 clones.</title>
        <authorList>
            <person name="Sato S."/>
            <person name="Kotani H."/>
            <person name="Nakamura Y."/>
            <person name="Kaneko T."/>
            <person name="Asamizu E."/>
            <person name="Fukami M."/>
            <person name="Miyajima N."/>
            <person name="Tabata S."/>
        </authorList>
    </citation>
    <scope>NUCLEOTIDE SEQUENCE [LARGE SCALE GENOMIC DNA]</scope>
    <source>
        <strain>cv. Columbia</strain>
    </source>
</reference>
<reference key="2">
    <citation type="journal article" date="2017" name="Plant J.">
        <title>Araport11: a complete reannotation of the Arabidopsis thaliana reference genome.</title>
        <authorList>
            <person name="Cheng C.Y."/>
            <person name="Krishnakumar V."/>
            <person name="Chan A.P."/>
            <person name="Thibaud-Nissen F."/>
            <person name="Schobel S."/>
            <person name="Town C.D."/>
        </authorList>
    </citation>
    <scope>GENOME REANNOTATION</scope>
    <source>
        <strain>cv. Columbia</strain>
    </source>
</reference>
<reference key="3">
    <citation type="journal article" date="2004" name="Carbohydr. Res.">
        <title>Pectin methylesterases: sequence-structural features and phylogenetic relationships.</title>
        <authorList>
            <person name="Markovic O."/>
            <person name="Janecek S."/>
        </authorList>
    </citation>
    <scope>GENE FAMILY</scope>
    <scope>NOMENCLATURE</scope>
</reference>
<feature type="signal peptide" evidence="2">
    <location>
        <begin position="1"/>
        <end position="19"/>
    </location>
</feature>
<feature type="chain" id="PRO_0000371695" description="Probable pectinesterase/pectinesterase inhibitor 47">
    <location>
        <begin position="20"/>
        <end position="624"/>
    </location>
</feature>
<feature type="region of interest" description="Disordered" evidence="4">
    <location>
        <begin position="24"/>
        <end position="88"/>
    </location>
</feature>
<feature type="region of interest" description="Pectinesterase inhibitor 47">
    <location>
        <begin position="74"/>
        <end position="236"/>
    </location>
</feature>
<feature type="region of interest" description="Pectinesterase 47">
    <location>
        <begin position="307"/>
        <end position="606"/>
    </location>
</feature>
<feature type="compositionally biased region" description="Pro residues" evidence="4">
    <location>
        <begin position="25"/>
        <end position="84"/>
    </location>
</feature>
<feature type="active site" description="Proton donor; for pectinesterase activity" evidence="3">
    <location>
        <position position="438"/>
    </location>
</feature>
<feature type="active site" description="Nucleophile; for pectinesterase activity" evidence="3">
    <location>
        <position position="459"/>
    </location>
</feature>
<feature type="binding site" evidence="1">
    <location>
        <position position="385"/>
    </location>
    <ligand>
        <name>substrate</name>
        <note>for pectinesterase activity</note>
    </ligand>
</feature>
<feature type="binding site" evidence="1">
    <location>
        <position position="415"/>
    </location>
    <ligand>
        <name>substrate</name>
        <note>for pectinesterase activity</note>
    </ligand>
</feature>
<feature type="binding site" evidence="1">
    <location>
        <position position="527"/>
    </location>
    <ligand>
        <name>substrate</name>
        <note>for pectinesterase activity</note>
    </ligand>
</feature>
<feature type="binding site" evidence="1">
    <location>
        <position position="529"/>
    </location>
    <ligand>
        <name>substrate</name>
        <note>for pectinesterase activity</note>
    </ligand>
</feature>
<feature type="site" description="Transition state stabilizer" evidence="1">
    <location>
        <position position="437"/>
    </location>
</feature>
<feature type="glycosylation site" description="N-linked (GlcNAc...) asparagine" evidence="2">
    <location>
        <position position="225"/>
    </location>
</feature>
<feature type="glycosylation site" description="N-linked (GlcNAc...) asparagine" evidence="2">
    <location>
        <position position="330"/>
    </location>
</feature>
<feature type="glycosylation site" description="N-linked (GlcNAc...) asparagine" evidence="2">
    <location>
        <position position="369"/>
    </location>
</feature>
<feature type="glycosylation site" description="N-linked (GlcNAc...) asparagine" evidence="2">
    <location>
        <position position="376"/>
    </location>
</feature>
<feature type="glycosylation site" description="N-linked (GlcNAc...) asparagine" evidence="2">
    <location>
        <position position="387"/>
    </location>
</feature>
<feature type="glycosylation site" description="N-linked (GlcNAc...) asparagine" evidence="2">
    <location>
        <position position="505"/>
    </location>
</feature>
<feature type="glycosylation site" description="N-linked (GlcNAc...) asparagine" evidence="2">
    <location>
        <position position="555"/>
    </location>
</feature>
<feature type="glycosylation site" description="N-linked (GlcNAc...) asparagine" evidence="2">
    <location>
        <position position="596"/>
    </location>
</feature>
<feature type="glycosylation site" description="N-linked (GlcNAc...) asparagine" evidence="2">
    <location>
        <position position="601"/>
    </location>
</feature>
<feature type="disulfide bond" evidence="1">
    <location>
        <begin position="452"/>
        <end position="472"/>
    </location>
</feature>
<sequence>MQTHSSSLVFLALLCLSWALLVSPTRPPSQPPSHPPIQPSSQPPTQPPSQPPTQPPTQPPSHPPTQPPTPPPSQSPSQPSPLPPNIACKSTPYPKLCRTILSAVKSSPSDPYHYGKFTMKQCLKQARRLSKVINRFAQRVEADPGTSTVEEVSAVADCGELAELSVEYLETVTEELKAAELMTAALVDRVTSLLGGVVTNQQTCLDGLVDAKSGFATAIGTPLGNLTRLYSVSLGLVSHALNRNLKRYKGSKGKIFGGGNKPVREPLETLIKVLRKTCDKGKDCRKANRNLGELGETSGGSILVREAVTVGPYETDNFPTITEAVAAAPNHTFPEQGYFVIYARAGLYEEYVVISNKKRNIMLIGDGINKTIISGNHSFIDGWTTYNSSTFAVVGDRFVAVDVTFRNTAGPEKHQAVAVRNNADGSTFYRCSFEGYQDTLYVHSLRQFYRECDIYGTIDFIFGNAAAIFQNCNIYARKPMANQKNAVTAHGRTDPNQKTGISIINCTIGAAPDLAADPKSTMTFLGRPWKPYSRTVYIQSYISDVVQPVGWLEWNGTTGLDTISYGEYDNFGPGADTSKRVQWSGYSLLNLVQAMNFTVYNFTLGDTWLPQTDIPFYGGLLHTE</sequence>
<accession>Q9FF77</accession>
<gene>
    <name type="primary">PME47</name>
    <name type="synonym">ARATH47</name>
    <name type="ordered locus">At5g04970</name>
    <name type="ORF">MUG13.17</name>
</gene>
<name>PME47_ARATH</name>
<dbReference type="EC" id="3.1.1.11"/>
<dbReference type="EMBL" id="AB005245">
    <property type="protein sequence ID" value="BAB11519.1"/>
    <property type="molecule type" value="Genomic_DNA"/>
</dbReference>
<dbReference type="EMBL" id="CP002688">
    <property type="protein sequence ID" value="AED90810.1"/>
    <property type="molecule type" value="Genomic_DNA"/>
</dbReference>
<dbReference type="RefSeq" id="NP_196116.1">
    <property type="nucleotide sequence ID" value="NM_120579.3"/>
</dbReference>
<dbReference type="SMR" id="Q9FF77"/>
<dbReference type="FunCoup" id="Q9FF77">
    <property type="interactions" value="158"/>
</dbReference>
<dbReference type="STRING" id="3702.Q9FF77"/>
<dbReference type="GlyCosmos" id="Q9FF77">
    <property type="glycosylation" value="9 sites, No reported glycans"/>
</dbReference>
<dbReference type="GlyGen" id="Q9FF77">
    <property type="glycosylation" value="11 sites"/>
</dbReference>
<dbReference type="PaxDb" id="3702-AT5G04970.1"/>
<dbReference type="ProteomicsDB" id="234881"/>
<dbReference type="EnsemblPlants" id="AT5G04970.1">
    <property type="protein sequence ID" value="AT5G04970.1"/>
    <property type="gene ID" value="AT5G04970"/>
</dbReference>
<dbReference type="GeneID" id="830379"/>
<dbReference type="Gramene" id="AT5G04970.1">
    <property type="protein sequence ID" value="AT5G04970.1"/>
    <property type="gene ID" value="AT5G04970"/>
</dbReference>
<dbReference type="KEGG" id="ath:AT5G04970"/>
<dbReference type="Araport" id="AT5G04970"/>
<dbReference type="TAIR" id="AT5G04970"/>
<dbReference type="eggNOG" id="ENOG502QT2B">
    <property type="taxonomic scope" value="Eukaryota"/>
</dbReference>
<dbReference type="HOGENOM" id="CLU_012243_9_1_1"/>
<dbReference type="InParanoid" id="Q9FF77"/>
<dbReference type="OMA" id="HYGKFTM"/>
<dbReference type="PhylomeDB" id="Q9FF77"/>
<dbReference type="BioCyc" id="ARA:AT5G04970-MONOMER"/>
<dbReference type="UniPathway" id="UPA00545">
    <property type="reaction ID" value="UER00823"/>
</dbReference>
<dbReference type="PRO" id="PR:Q9FF77"/>
<dbReference type="Proteomes" id="UP000006548">
    <property type="component" value="Chromosome 5"/>
</dbReference>
<dbReference type="ExpressionAtlas" id="Q9FF77">
    <property type="expression patterns" value="baseline and differential"/>
</dbReference>
<dbReference type="GO" id="GO:0005576">
    <property type="term" value="C:extracellular region"/>
    <property type="evidence" value="ECO:0007669"/>
    <property type="project" value="UniProtKB-KW"/>
</dbReference>
<dbReference type="GO" id="GO:0004857">
    <property type="term" value="F:enzyme inhibitor activity"/>
    <property type="evidence" value="ECO:0007669"/>
    <property type="project" value="InterPro"/>
</dbReference>
<dbReference type="GO" id="GO:0030599">
    <property type="term" value="F:pectinesterase activity"/>
    <property type="evidence" value="ECO:0007669"/>
    <property type="project" value="UniProtKB-EC"/>
</dbReference>
<dbReference type="GO" id="GO:0042545">
    <property type="term" value="P:cell wall modification"/>
    <property type="evidence" value="ECO:0007669"/>
    <property type="project" value="InterPro"/>
</dbReference>
<dbReference type="GO" id="GO:0045490">
    <property type="term" value="P:pectin catabolic process"/>
    <property type="evidence" value="ECO:0007669"/>
    <property type="project" value="UniProtKB-UniPathway"/>
</dbReference>
<dbReference type="CDD" id="cd15798">
    <property type="entry name" value="PMEI-like_3"/>
    <property type="match status" value="1"/>
</dbReference>
<dbReference type="FunFam" id="2.160.20.10:FF:000001">
    <property type="entry name" value="Pectinesterase"/>
    <property type="match status" value="1"/>
</dbReference>
<dbReference type="Gene3D" id="1.20.140.40">
    <property type="entry name" value="Invertase/pectin methylesterase inhibitor family protein"/>
    <property type="match status" value="1"/>
</dbReference>
<dbReference type="Gene3D" id="2.160.20.10">
    <property type="entry name" value="Single-stranded right-handed beta-helix, Pectin lyase-like"/>
    <property type="match status" value="1"/>
</dbReference>
<dbReference type="InterPro" id="IPR035513">
    <property type="entry name" value="Invertase/methylesterase_inhib"/>
</dbReference>
<dbReference type="InterPro" id="IPR012334">
    <property type="entry name" value="Pectin_lyas_fold"/>
</dbReference>
<dbReference type="InterPro" id="IPR011050">
    <property type="entry name" value="Pectin_lyase_fold/virulence"/>
</dbReference>
<dbReference type="InterPro" id="IPR033131">
    <property type="entry name" value="Pectinesterase_Asp_AS"/>
</dbReference>
<dbReference type="InterPro" id="IPR000070">
    <property type="entry name" value="Pectinesterase_cat"/>
</dbReference>
<dbReference type="InterPro" id="IPR006501">
    <property type="entry name" value="Pectinesterase_inhib_dom"/>
</dbReference>
<dbReference type="PANTHER" id="PTHR31707">
    <property type="entry name" value="PECTINESTERASE"/>
    <property type="match status" value="1"/>
</dbReference>
<dbReference type="Pfam" id="PF01095">
    <property type="entry name" value="Pectinesterase"/>
    <property type="match status" value="1"/>
</dbReference>
<dbReference type="Pfam" id="PF04043">
    <property type="entry name" value="PMEI"/>
    <property type="match status" value="1"/>
</dbReference>
<dbReference type="PRINTS" id="PR01217">
    <property type="entry name" value="PRICHEXTENSN"/>
</dbReference>
<dbReference type="SMART" id="SM00856">
    <property type="entry name" value="PMEI"/>
    <property type="match status" value="1"/>
</dbReference>
<dbReference type="SUPFAM" id="SSF51126">
    <property type="entry name" value="Pectin lyase-like"/>
    <property type="match status" value="1"/>
</dbReference>
<dbReference type="SUPFAM" id="SSF101148">
    <property type="entry name" value="Plant invertase/pectin methylesterase inhibitor"/>
    <property type="match status" value="1"/>
</dbReference>
<dbReference type="PROSITE" id="PS00503">
    <property type="entry name" value="PECTINESTERASE_2"/>
    <property type="match status" value="1"/>
</dbReference>
<protein>
    <recommendedName>
        <fullName>Probable pectinesterase/pectinesterase inhibitor 47</fullName>
    </recommendedName>
    <domain>
        <recommendedName>
            <fullName>Pectinesterase inhibitor 47</fullName>
        </recommendedName>
        <alternativeName>
            <fullName>Pectin methylesterase inhibitor 47</fullName>
        </alternativeName>
    </domain>
    <domain>
        <recommendedName>
            <fullName>Pectinesterase 47</fullName>
            <shortName>PE 47</shortName>
            <ecNumber>3.1.1.11</ecNumber>
        </recommendedName>
        <alternativeName>
            <fullName>Pectin methylesterase 47</fullName>
            <shortName>AtPME47</shortName>
        </alternativeName>
    </domain>
</protein>
<comment type="function">
    <text evidence="1">Acts in the modification of cell walls via demethylesterification of cell wall pectin.</text>
</comment>
<comment type="catalytic activity">
    <reaction>
        <text>[(1-&gt;4)-alpha-D-galacturonosyl methyl ester](n) + n H2O = [(1-&gt;4)-alpha-D-galacturonosyl](n) + n methanol + n H(+)</text>
        <dbReference type="Rhea" id="RHEA:22380"/>
        <dbReference type="Rhea" id="RHEA-COMP:14570"/>
        <dbReference type="Rhea" id="RHEA-COMP:14573"/>
        <dbReference type="ChEBI" id="CHEBI:15377"/>
        <dbReference type="ChEBI" id="CHEBI:15378"/>
        <dbReference type="ChEBI" id="CHEBI:17790"/>
        <dbReference type="ChEBI" id="CHEBI:140522"/>
        <dbReference type="ChEBI" id="CHEBI:140523"/>
        <dbReference type="EC" id="3.1.1.11"/>
    </reaction>
</comment>
<comment type="pathway">
    <text>Glycan metabolism; pectin degradation; 2-dehydro-3-deoxy-D-gluconate from pectin: step 1/5.</text>
</comment>
<comment type="subcellular location">
    <subcellularLocation>
        <location evidence="1">Secreted</location>
        <location evidence="1">Cell wall</location>
    </subcellularLocation>
</comment>
<comment type="miscellaneous">
    <text>The PMEI region may act as an autoinhibitory domain and prevent untimely PME activity during transport.</text>
</comment>
<comment type="similarity">
    <text evidence="5">In the N-terminal section; belongs to the PMEI family.</text>
</comment>
<comment type="similarity">
    <text evidence="5">In the C-terminal section; belongs to the pectinesterase family.</text>
</comment>
<evidence type="ECO:0000250" key="1"/>
<evidence type="ECO:0000255" key="2"/>
<evidence type="ECO:0000255" key="3">
    <source>
        <dbReference type="PROSITE-ProRule" id="PRU10040"/>
    </source>
</evidence>
<evidence type="ECO:0000256" key="4">
    <source>
        <dbReference type="SAM" id="MobiDB-lite"/>
    </source>
</evidence>
<evidence type="ECO:0000305" key="5"/>
<organism>
    <name type="scientific">Arabidopsis thaliana</name>
    <name type="common">Mouse-ear cress</name>
    <dbReference type="NCBI Taxonomy" id="3702"/>
    <lineage>
        <taxon>Eukaryota</taxon>
        <taxon>Viridiplantae</taxon>
        <taxon>Streptophyta</taxon>
        <taxon>Embryophyta</taxon>
        <taxon>Tracheophyta</taxon>
        <taxon>Spermatophyta</taxon>
        <taxon>Magnoliopsida</taxon>
        <taxon>eudicotyledons</taxon>
        <taxon>Gunneridae</taxon>
        <taxon>Pentapetalae</taxon>
        <taxon>rosids</taxon>
        <taxon>malvids</taxon>
        <taxon>Brassicales</taxon>
        <taxon>Brassicaceae</taxon>
        <taxon>Camelineae</taxon>
        <taxon>Arabidopsis</taxon>
    </lineage>
</organism>
<keyword id="KW-0063">Aspartyl esterase</keyword>
<keyword id="KW-0134">Cell wall</keyword>
<keyword id="KW-0961">Cell wall biogenesis/degradation</keyword>
<keyword id="KW-1015">Disulfide bond</keyword>
<keyword id="KW-0325">Glycoprotein</keyword>
<keyword id="KW-0378">Hydrolase</keyword>
<keyword id="KW-1185">Reference proteome</keyword>
<keyword id="KW-0964">Secreted</keyword>
<keyword id="KW-0732">Signal</keyword>
<proteinExistence type="evidence at transcript level"/>